<name>HIS7_CLOB6</name>
<sequence>MKESIAKVYRKTGETEIKSEINLYGEGKCDIKTGIVFLDHMLNLMARHGLIDLKLQAQGDLQVDSHHTVEDVGIVLGQCFKEALGDKKSIKRYGTSFIPMDEALASVSIDISGRPYIVCDFNFTVDKLGELDTELVEEFLRALTFNAGITLHARVLYGKNNHHMIEAVFKALGRALREAVDKDKRINGVMSTKGIL</sequence>
<dbReference type="EC" id="4.2.1.19" evidence="1"/>
<dbReference type="EMBL" id="CP001083">
    <property type="protein sequence ID" value="ACQ52369.1"/>
    <property type="molecule type" value="Genomic_DNA"/>
</dbReference>
<dbReference type="RefSeq" id="WP_003360805.1">
    <property type="nucleotide sequence ID" value="NC_012658.1"/>
</dbReference>
<dbReference type="SMR" id="C3KVX2"/>
<dbReference type="KEGG" id="cbi:CLJ_B1675"/>
<dbReference type="HOGENOM" id="CLU_044308_2_0_9"/>
<dbReference type="UniPathway" id="UPA00031">
    <property type="reaction ID" value="UER00011"/>
</dbReference>
<dbReference type="Proteomes" id="UP000002333">
    <property type="component" value="Chromosome"/>
</dbReference>
<dbReference type="GO" id="GO:0005737">
    <property type="term" value="C:cytoplasm"/>
    <property type="evidence" value="ECO:0007669"/>
    <property type="project" value="UniProtKB-SubCell"/>
</dbReference>
<dbReference type="GO" id="GO:0004424">
    <property type="term" value="F:imidazoleglycerol-phosphate dehydratase activity"/>
    <property type="evidence" value="ECO:0007669"/>
    <property type="project" value="UniProtKB-UniRule"/>
</dbReference>
<dbReference type="GO" id="GO:0000105">
    <property type="term" value="P:L-histidine biosynthetic process"/>
    <property type="evidence" value="ECO:0007669"/>
    <property type="project" value="UniProtKB-UniRule"/>
</dbReference>
<dbReference type="CDD" id="cd07914">
    <property type="entry name" value="IGPD"/>
    <property type="match status" value="1"/>
</dbReference>
<dbReference type="FunFam" id="3.30.230.40:FF:000001">
    <property type="entry name" value="Imidazoleglycerol-phosphate dehydratase HisB"/>
    <property type="match status" value="1"/>
</dbReference>
<dbReference type="FunFam" id="3.30.230.40:FF:000003">
    <property type="entry name" value="Imidazoleglycerol-phosphate dehydratase HisB"/>
    <property type="match status" value="1"/>
</dbReference>
<dbReference type="Gene3D" id="3.30.230.40">
    <property type="entry name" value="Imidazole glycerol phosphate dehydratase, domain 1"/>
    <property type="match status" value="2"/>
</dbReference>
<dbReference type="HAMAP" id="MF_00076">
    <property type="entry name" value="HisB"/>
    <property type="match status" value="1"/>
</dbReference>
<dbReference type="InterPro" id="IPR038494">
    <property type="entry name" value="IGPD_sf"/>
</dbReference>
<dbReference type="InterPro" id="IPR000807">
    <property type="entry name" value="ImidazoleglycerolP_deHydtase"/>
</dbReference>
<dbReference type="InterPro" id="IPR020565">
    <property type="entry name" value="ImidazoleglycerP_deHydtase_CS"/>
</dbReference>
<dbReference type="InterPro" id="IPR020568">
    <property type="entry name" value="Ribosomal_Su5_D2-typ_SF"/>
</dbReference>
<dbReference type="NCBIfam" id="NF002107">
    <property type="entry name" value="PRK00951.1-2"/>
    <property type="match status" value="1"/>
</dbReference>
<dbReference type="NCBIfam" id="NF002111">
    <property type="entry name" value="PRK00951.2-1"/>
    <property type="match status" value="1"/>
</dbReference>
<dbReference type="NCBIfam" id="NF002112">
    <property type="entry name" value="PRK00951.2-2"/>
    <property type="match status" value="1"/>
</dbReference>
<dbReference type="NCBIfam" id="NF002114">
    <property type="entry name" value="PRK00951.2-4"/>
    <property type="match status" value="1"/>
</dbReference>
<dbReference type="PANTHER" id="PTHR23133:SF2">
    <property type="entry name" value="IMIDAZOLEGLYCEROL-PHOSPHATE DEHYDRATASE"/>
    <property type="match status" value="1"/>
</dbReference>
<dbReference type="PANTHER" id="PTHR23133">
    <property type="entry name" value="IMIDAZOLEGLYCEROL-PHOSPHATE DEHYDRATASE HIS7"/>
    <property type="match status" value="1"/>
</dbReference>
<dbReference type="Pfam" id="PF00475">
    <property type="entry name" value="IGPD"/>
    <property type="match status" value="1"/>
</dbReference>
<dbReference type="SUPFAM" id="SSF54211">
    <property type="entry name" value="Ribosomal protein S5 domain 2-like"/>
    <property type="match status" value="2"/>
</dbReference>
<dbReference type="PROSITE" id="PS00954">
    <property type="entry name" value="IGP_DEHYDRATASE_1"/>
    <property type="match status" value="1"/>
</dbReference>
<dbReference type="PROSITE" id="PS00955">
    <property type="entry name" value="IGP_DEHYDRATASE_2"/>
    <property type="match status" value="1"/>
</dbReference>
<feature type="chain" id="PRO_1000202508" description="Imidazoleglycerol-phosphate dehydratase">
    <location>
        <begin position="1"/>
        <end position="196"/>
    </location>
</feature>
<evidence type="ECO:0000255" key="1">
    <source>
        <dbReference type="HAMAP-Rule" id="MF_00076"/>
    </source>
</evidence>
<proteinExistence type="inferred from homology"/>
<protein>
    <recommendedName>
        <fullName evidence="1">Imidazoleglycerol-phosphate dehydratase</fullName>
        <shortName evidence="1">IGPD</shortName>
        <ecNumber evidence="1">4.2.1.19</ecNumber>
    </recommendedName>
</protein>
<comment type="catalytic activity">
    <reaction evidence="1">
        <text>D-erythro-1-(imidazol-4-yl)glycerol 3-phosphate = 3-(imidazol-4-yl)-2-oxopropyl phosphate + H2O</text>
        <dbReference type="Rhea" id="RHEA:11040"/>
        <dbReference type="ChEBI" id="CHEBI:15377"/>
        <dbReference type="ChEBI" id="CHEBI:57766"/>
        <dbReference type="ChEBI" id="CHEBI:58278"/>
        <dbReference type="EC" id="4.2.1.19"/>
    </reaction>
</comment>
<comment type="pathway">
    <text evidence="1">Amino-acid biosynthesis; L-histidine biosynthesis; L-histidine from 5-phospho-alpha-D-ribose 1-diphosphate: step 6/9.</text>
</comment>
<comment type="subcellular location">
    <subcellularLocation>
        <location evidence="1">Cytoplasm</location>
    </subcellularLocation>
</comment>
<comment type="similarity">
    <text evidence="1">Belongs to the imidazoleglycerol-phosphate dehydratase family.</text>
</comment>
<reference key="1">
    <citation type="submission" date="2008-05" db="EMBL/GenBank/DDBJ databases">
        <title>Genome sequence of Clostridium botulinum Ba4 strain 657.</title>
        <authorList>
            <person name="Shrivastava S."/>
            <person name="Brown J.L."/>
            <person name="Bruce D."/>
            <person name="Detter C."/>
            <person name="Munk C."/>
            <person name="Smith L.A."/>
            <person name="Smith T.J."/>
            <person name="Sutton G."/>
            <person name="Brettin T.S."/>
        </authorList>
    </citation>
    <scope>NUCLEOTIDE SEQUENCE [LARGE SCALE GENOMIC DNA]</scope>
    <source>
        <strain>657 / Type Ba4</strain>
    </source>
</reference>
<accession>C3KVX2</accession>
<keyword id="KW-0028">Amino-acid biosynthesis</keyword>
<keyword id="KW-0963">Cytoplasm</keyword>
<keyword id="KW-0368">Histidine biosynthesis</keyword>
<keyword id="KW-0456">Lyase</keyword>
<organism>
    <name type="scientific">Clostridium botulinum (strain 657 / Type Ba4)</name>
    <dbReference type="NCBI Taxonomy" id="515621"/>
    <lineage>
        <taxon>Bacteria</taxon>
        <taxon>Bacillati</taxon>
        <taxon>Bacillota</taxon>
        <taxon>Clostridia</taxon>
        <taxon>Eubacteriales</taxon>
        <taxon>Clostridiaceae</taxon>
        <taxon>Clostridium</taxon>
    </lineage>
</organism>
<gene>
    <name evidence="1" type="primary">hisB</name>
    <name type="ordered locus">CLJ_B1675</name>
</gene>